<gene>
    <name type="ordered locus">At2g27520</name>
    <name type="ORF">F10A12.29</name>
</gene>
<sequence length="347" mass="40530">MVRLDLPWDLVDEILSRLPATSLGRLRFTCKRWNALFKDPEFITKQFHKAAKQDLVLMLSNFGVYSMSTNLKEIPNNIEIAQVFHCNGLLLCSTEEGNKTKLVVVNPCTGQTRWIEPRTDYNYNHDIALGYGNNSTKKSYDSYKILRITYGCKLVEIFELKSNSWRVLSKVHPNVEKHYYGGVSFKGNTYWLSYTKFNILSFDFTTETFRSVPLPFLYQDGFVTLALSVVREEQLLLLRSRFDMGQVGIWMCNKIDTETVLSWSKSFTLEFDSLRDLPVMSILRIFIEEDKKVIVVDCDDRWKENMIYIVGKNGFKKLSYEKDRSNLWRLPFFFSYVPSLVGLYPPM</sequence>
<feature type="chain" id="PRO_0000283165" description="F-box/LRR-repeat/kelch-repeat protein At2g27520">
    <location>
        <begin position="1"/>
        <end position="347"/>
    </location>
</feature>
<feature type="domain" description="F-box" evidence="1">
    <location>
        <begin position="1"/>
        <end position="50"/>
    </location>
</feature>
<feature type="repeat" description="LRR 1">
    <location>
        <begin position="59"/>
        <end position="82"/>
    </location>
</feature>
<feature type="repeat" description="Kelch 1">
    <location>
        <begin position="138"/>
        <end position="187"/>
    </location>
</feature>
<feature type="repeat" description="LRR 2">
    <location>
        <begin position="152"/>
        <end position="177"/>
    </location>
</feature>
<feature type="repeat" description="LRR 3">
    <location>
        <begin position="196"/>
        <end position="220"/>
    </location>
</feature>
<feature type="repeat" description="LRR 4">
    <location>
        <begin position="261"/>
        <end position="285"/>
    </location>
</feature>
<feature type="repeat" description="Kelch 2">
    <location>
        <begin position="306"/>
        <end position="347"/>
    </location>
</feature>
<evidence type="ECO:0000255" key="1">
    <source>
        <dbReference type="PROSITE-ProRule" id="PRU00080"/>
    </source>
</evidence>
<accession>Q9ZNQ3</accession>
<accession>Q58G06</accession>
<keyword id="KW-0880">Kelch repeat</keyword>
<keyword id="KW-0433">Leucine-rich repeat</keyword>
<keyword id="KW-1185">Reference proteome</keyword>
<keyword id="KW-0677">Repeat</keyword>
<organism>
    <name type="scientific">Arabidopsis thaliana</name>
    <name type="common">Mouse-ear cress</name>
    <dbReference type="NCBI Taxonomy" id="3702"/>
    <lineage>
        <taxon>Eukaryota</taxon>
        <taxon>Viridiplantae</taxon>
        <taxon>Streptophyta</taxon>
        <taxon>Embryophyta</taxon>
        <taxon>Tracheophyta</taxon>
        <taxon>Spermatophyta</taxon>
        <taxon>Magnoliopsida</taxon>
        <taxon>eudicotyledons</taxon>
        <taxon>Gunneridae</taxon>
        <taxon>Pentapetalae</taxon>
        <taxon>rosids</taxon>
        <taxon>malvids</taxon>
        <taxon>Brassicales</taxon>
        <taxon>Brassicaceae</taxon>
        <taxon>Camelineae</taxon>
        <taxon>Arabidopsis</taxon>
    </lineage>
</organism>
<protein>
    <recommendedName>
        <fullName>F-box/LRR-repeat/kelch-repeat protein At2g27520</fullName>
    </recommendedName>
</protein>
<name>FBLK3_ARATH</name>
<dbReference type="EMBL" id="AC005824">
    <property type="protein sequence ID" value="AAC73046.1"/>
    <property type="molecule type" value="Genomic_DNA"/>
</dbReference>
<dbReference type="EMBL" id="AC006232">
    <property type="protein sequence ID" value="AAM15177.1"/>
    <property type="molecule type" value="Genomic_DNA"/>
</dbReference>
<dbReference type="EMBL" id="CP002685">
    <property type="protein sequence ID" value="AEC08009.1"/>
    <property type="molecule type" value="Genomic_DNA"/>
</dbReference>
<dbReference type="EMBL" id="AY954803">
    <property type="protein sequence ID" value="AAX55129.1"/>
    <property type="molecule type" value="Genomic_DNA"/>
</dbReference>
<dbReference type="EMBL" id="AY464585">
    <property type="status" value="NOT_ANNOTATED_CDS"/>
    <property type="molecule type" value="mRNA"/>
</dbReference>
<dbReference type="PIR" id="H84673">
    <property type="entry name" value="H84673"/>
</dbReference>
<dbReference type="RefSeq" id="NP_565653.1">
    <property type="nucleotide sequence ID" value="NM_128312.2"/>
</dbReference>
<dbReference type="SMR" id="Q9ZNQ3"/>
<dbReference type="FunCoup" id="Q9ZNQ3">
    <property type="interactions" value="3"/>
</dbReference>
<dbReference type="STRING" id="3702.Q9ZNQ3"/>
<dbReference type="PaxDb" id="3702-AT2G27520.1"/>
<dbReference type="EnsemblPlants" id="AT2G27520.1">
    <property type="protein sequence ID" value="AT2G27520.1"/>
    <property type="gene ID" value="AT2G27520"/>
</dbReference>
<dbReference type="GeneID" id="817298"/>
<dbReference type="Gramene" id="AT2G27520.1">
    <property type="protein sequence ID" value="AT2G27520.1"/>
    <property type="gene ID" value="AT2G27520"/>
</dbReference>
<dbReference type="KEGG" id="ath:AT2G27520"/>
<dbReference type="Araport" id="AT2G27520"/>
<dbReference type="TAIR" id="AT2G27520"/>
<dbReference type="HOGENOM" id="CLU_034692_1_0_1"/>
<dbReference type="InParanoid" id="Q9ZNQ3"/>
<dbReference type="OMA" id="CITWDIR"/>
<dbReference type="PhylomeDB" id="Q9ZNQ3"/>
<dbReference type="PRO" id="PR:Q9ZNQ3"/>
<dbReference type="Proteomes" id="UP000006548">
    <property type="component" value="Chromosome 2"/>
</dbReference>
<dbReference type="ExpressionAtlas" id="Q9ZNQ3">
    <property type="expression patterns" value="baseline and differential"/>
</dbReference>
<dbReference type="CDD" id="cd22157">
    <property type="entry name" value="F-box_AtFBW1-like"/>
    <property type="match status" value="1"/>
</dbReference>
<dbReference type="Gene3D" id="1.20.1280.50">
    <property type="match status" value="1"/>
</dbReference>
<dbReference type="InterPro" id="IPR006527">
    <property type="entry name" value="F-box-assoc_dom_typ1"/>
</dbReference>
<dbReference type="InterPro" id="IPR017451">
    <property type="entry name" value="F-box-assoc_interact_dom"/>
</dbReference>
<dbReference type="InterPro" id="IPR036047">
    <property type="entry name" value="F-box-like_dom_sf"/>
</dbReference>
<dbReference type="InterPro" id="IPR001810">
    <property type="entry name" value="F-box_dom"/>
</dbReference>
<dbReference type="InterPro" id="IPR011043">
    <property type="entry name" value="Gal_Oxase/kelch_b-propeller"/>
</dbReference>
<dbReference type="InterPro" id="IPR050796">
    <property type="entry name" value="SCF_F-box_component"/>
</dbReference>
<dbReference type="NCBIfam" id="TIGR01640">
    <property type="entry name" value="F_box_assoc_1"/>
    <property type="match status" value="1"/>
</dbReference>
<dbReference type="PANTHER" id="PTHR31672">
    <property type="entry name" value="BNACNNG10540D PROTEIN"/>
    <property type="match status" value="1"/>
</dbReference>
<dbReference type="PANTHER" id="PTHR31672:SF13">
    <property type="entry name" value="F-BOX PROTEIN CPR30-LIKE"/>
    <property type="match status" value="1"/>
</dbReference>
<dbReference type="Pfam" id="PF00646">
    <property type="entry name" value="F-box"/>
    <property type="match status" value="1"/>
</dbReference>
<dbReference type="Pfam" id="PF07734">
    <property type="entry name" value="FBA_1"/>
    <property type="match status" value="1"/>
</dbReference>
<dbReference type="SMART" id="SM00256">
    <property type="entry name" value="FBOX"/>
    <property type="match status" value="1"/>
</dbReference>
<dbReference type="SUPFAM" id="SSF81383">
    <property type="entry name" value="F-box domain"/>
    <property type="match status" value="1"/>
</dbReference>
<dbReference type="SUPFAM" id="SSF50965">
    <property type="entry name" value="Galactose oxidase, central domain"/>
    <property type="match status" value="1"/>
</dbReference>
<dbReference type="PROSITE" id="PS50181">
    <property type="entry name" value="FBOX"/>
    <property type="match status" value="1"/>
</dbReference>
<reference key="1">
    <citation type="journal article" date="1999" name="Nature">
        <title>Sequence and analysis of chromosome 2 of the plant Arabidopsis thaliana.</title>
        <authorList>
            <person name="Lin X."/>
            <person name="Kaul S."/>
            <person name="Rounsley S.D."/>
            <person name="Shea T.P."/>
            <person name="Benito M.-I."/>
            <person name="Town C.D."/>
            <person name="Fujii C.Y."/>
            <person name="Mason T.M."/>
            <person name="Bowman C.L."/>
            <person name="Barnstead M.E."/>
            <person name="Feldblyum T.V."/>
            <person name="Buell C.R."/>
            <person name="Ketchum K.A."/>
            <person name="Lee J.J."/>
            <person name="Ronning C.M."/>
            <person name="Koo H.L."/>
            <person name="Moffat K.S."/>
            <person name="Cronin L.A."/>
            <person name="Shen M."/>
            <person name="Pai G."/>
            <person name="Van Aken S."/>
            <person name="Umayam L."/>
            <person name="Tallon L.J."/>
            <person name="Gill J.E."/>
            <person name="Adams M.D."/>
            <person name="Carrera A.J."/>
            <person name="Creasy T.H."/>
            <person name="Goodman H.M."/>
            <person name="Somerville C.R."/>
            <person name="Copenhaver G.P."/>
            <person name="Preuss D."/>
            <person name="Nierman W.C."/>
            <person name="White O."/>
            <person name="Eisen J.A."/>
            <person name="Salzberg S.L."/>
            <person name="Fraser C.M."/>
            <person name="Venter J.C."/>
        </authorList>
    </citation>
    <scope>NUCLEOTIDE SEQUENCE [LARGE SCALE GENOMIC DNA]</scope>
    <source>
        <strain>cv. Columbia</strain>
    </source>
</reference>
<reference key="2">
    <citation type="journal article" date="2017" name="Plant J.">
        <title>Araport11: a complete reannotation of the Arabidopsis thaliana reference genome.</title>
        <authorList>
            <person name="Cheng C.Y."/>
            <person name="Krishnakumar V."/>
            <person name="Chan A.P."/>
            <person name="Thibaud-Nissen F."/>
            <person name="Schobel S."/>
            <person name="Town C.D."/>
        </authorList>
    </citation>
    <scope>GENOME REANNOTATION</scope>
    <source>
        <strain>cv. Columbia</strain>
    </source>
</reference>
<reference key="3">
    <citation type="submission" date="2005-03" db="EMBL/GenBank/DDBJ databases">
        <authorList>
            <person name="Underwood B.A."/>
            <person name="Xiao Y.-L."/>
            <person name="Moskal W.A. Jr."/>
            <person name="Monaghan E.L."/>
            <person name="Wang W."/>
            <person name="Redman J.C."/>
            <person name="Wu H.C."/>
            <person name="Utterback T."/>
            <person name="Town C.D."/>
        </authorList>
    </citation>
    <scope>NUCLEOTIDE SEQUENCE [LARGE SCALE GENOMIC DNA] OF 1-57</scope>
    <source>
        <strain>cv. Columbia</strain>
    </source>
</reference>
<reference key="4">
    <citation type="journal article" date="2005" name="Plant Physiol.">
        <title>Analysis of the cDNAs of hypothetical genes on Arabidopsis chromosome 2 reveals numerous transcript variants.</title>
        <authorList>
            <person name="Xiao Y.-L."/>
            <person name="Smith S.R."/>
            <person name="Ishmael N."/>
            <person name="Redman J.C."/>
            <person name="Kumar N."/>
            <person name="Monaghan E.L."/>
            <person name="Ayele M."/>
            <person name="Haas B.J."/>
            <person name="Wu H.C."/>
            <person name="Town C.D."/>
        </authorList>
    </citation>
    <scope>NUCLEOTIDE SEQUENCE [LARGE SCALE MRNA] OF 2-187</scope>
    <source>
        <strain>cv. Columbia</strain>
    </source>
</reference>
<proteinExistence type="evidence at transcript level"/>